<name>PYRR_MYCTA</name>
<sequence length="193" mass="20627">MGAAGDAAIGRESRELMSAADVGRTISRIAHQIIEKTALDDPVGPDAPRVVLLGIPTRGVTLANRLAGNITEYSGIHVGHGALDITLYRDDLMIKPPRPLASTSIPAGGIDDALVILVDDVLYSGRSVRSALDALRDVGRPRAVQLAVLVDRGHRELPLRADYVGKNVPTSRSESVHVRLREHDGRDGVVISR</sequence>
<feature type="chain" id="PRO_1000053850" description="Bifunctional protein PyrR">
    <location>
        <begin position="1"/>
        <end position="193"/>
    </location>
</feature>
<feature type="short sequence motif" description="PRPP-binding" evidence="1">
    <location>
        <begin position="115"/>
        <end position="127"/>
    </location>
</feature>
<proteinExistence type="inferred from homology"/>
<dbReference type="EC" id="2.4.2.9" evidence="1"/>
<dbReference type="EMBL" id="CP000611">
    <property type="protein sequence ID" value="ABQ73131.1"/>
    <property type="molecule type" value="Genomic_DNA"/>
</dbReference>
<dbReference type="RefSeq" id="WP_003407196.1">
    <property type="nucleotide sequence ID" value="NZ_CP016972.1"/>
</dbReference>
<dbReference type="SMR" id="A5U281"/>
<dbReference type="KEGG" id="mra:MRA_1388"/>
<dbReference type="eggNOG" id="COG2065">
    <property type="taxonomic scope" value="Bacteria"/>
</dbReference>
<dbReference type="HOGENOM" id="CLU_094234_2_1_11"/>
<dbReference type="Proteomes" id="UP000001988">
    <property type="component" value="Chromosome"/>
</dbReference>
<dbReference type="GO" id="GO:0004845">
    <property type="term" value="F:uracil phosphoribosyltransferase activity"/>
    <property type="evidence" value="ECO:0007669"/>
    <property type="project" value="UniProtKB-UniRule"/>
</dbReference>
<dbReference type="GO" id="GO:0006355">
    <property type="term" value="P:regulation of DNA-templated transcription"/>
    <property type="evidence" value="ECO:0007669"/>
    <property type="project" value="UniProtKB-UniRule"/>
</dbReference>
<dbReference type="CDD" id="cd06223">
    <property type="entry name" value="PRTases_typeI"/>
    <property type="match status" value="1"/>
</dbReference>
<dbReference type="FunFam" id="3.40.50.2020:FF:000020">
    <property type="entry name" value="Bifunctional protein PyrR"/>
    <property type="match status" value="1"/>
</dbReference>
<dbReference type="Gene3D" id="3.40.50.2020">
    <property type="match status" value="1"/>
</dbReference>
<dbReference type="HAMAP" id="MF_01219">
    <property type="entry name" value="PyrR"/>
    <property type="match status" value="1"/>
</dbReference>
<dbReference type="InterPro" id="IPR000836">
    <property type="entry name" value="PRibTrfase_dom"/>
</dbReference>
<dbReference type="InterPro" id="IPR029057">
    <property type="entry name" value="PRTase-like"/>
</dbReference>
<dbReference type="InterPro" id="IPR023050">
    <property type="entry name" value="PyrR"/>
</dbReference>
<dbReference type="InterPro" id="IPR050137">
    <property type="entry name" value="PyrR_bifunctional"/>
</dbReference>
<dbReference type="NCBIfam" id="NF003547">
    <property type="entry name" value="PRK05205.1-3"/>
    <property type="match status" value="1"/>
</dbReference>
<dbReference type="NCBIfam" id="NF003549">
    <property type="entry name" value="PRK05205.1-5"/>
    <property type="match status" value="1"/>
</dbReference>
<dbReference type="PANTHER" id="PTHR11608">
    <property type="entry name" value="BIFUNCTIONAL PROTEIN PYRR"/>
    <property type="match status" value="1"/>
</dbReference>
<dbReference type="PANTHER" id="PTHR11608:SF0">
    <property type="entry name" value="BIFUNCTIONAL PROTEIN PYRR"/>
    <property type="match status" value="1"/>
</dbReference>
<dbReference type="Pfam" id="PF00156">
    <property type="entry name" value="Pribosyltran"/>
    <property type="match status" value="1"/>
</dbReference>
<dbReference type="SUPFAM" id="SSF53271">
    <property type="entry name" value="PRTase-like"/>
    <property type="match status" value="1"/>
</dbReference>
<keyword id="KW-0328">Glycosyltransferase</keyword>
<keyword id="KW-1185">Reference proteome</keyword>
<keyword id="KW-0804">Transcription</keyword>
<keyword id="KW-0805">Transcription regulation</keyword>
<keyword id="KW-0808">Transferase</keyword>
<evidence type="ECO:0000255" key="1">
    <source>
        <dbReference type="HAMAP-Rule" id="MF_01219"/>
    </source>
</evidence>
<organism>
    <name type="scientific">Mycobacterium tuberculosis (strain ATCC 25177 / H37Ra)</name>
    <dbReference type="NCBI Taxonomy" id="419947"/>
    <lineage>
        <taxon>Bacteria</taxon>
        <taxon>Bacillati</taxon>
        <taxon>Actinomycetota</taxon>
        <taxon>Actinomycetes</taxon>
        <taxon>Mycobacteriales</taxon>
        <taxon>Mycobacteriaceae</taxon>
        <taxon>Mycobacterium</taxon>
        <taxon>Mycobacterium tuberculosis complex</taxon>
    </lineage>
</organism>
<accession>A5U281</accession>
<protein>
    <recommendedName>
        <fullName evidence="1">Bifunctional protein PyrR</fullName>
    </recommendedName>
    <domain>
        <recommendedName>
            <fullName evidence="1">Pyrimidine operon regulatory protein</fullName>
        </recommendedName>
    </domain>
    <domain>
        <recommendedName>
            <fullName evidence="1">Uracil phosphoribosyltransferase</fullName>
            <shortName evidence="1">UPRTase</shortName>
            <ecNumber evidence="1">2.4.2.9</ecNumber>
        </recommendedName>
    </domain>
</protein>
<gene>
    <name evidence="1" type="primary">pyrR</name>
    <name type="ordered locus">MRA_1388</name>
</gene>
<reference key="1">
    <citation type="journal article" date="2008" name="PLoS ONE">
        <title>Genetic basis of virulence attenuation revealed by comparative genomic analysis of Mycobacterium tuberculosis strain H37Ra versus H37Rv.</title>
        <authorList>
            <person name="Zheng H."/>
            <person name="Lu L."/>
            <person name="Wang B."/>
            <person name="Pu S."/>
            <person name="Zhang X."/>
            <person name="Zhu G."/>
            <person name="Shi W."/>
            <person name="Zhang L."/>
            <person name="Wang H."/>
            <person name="Wang S."/>
            <person name="Zhao G."/>
            <person name="Zhang Y."/>
        </authorList>
    </citation>
    <scope>NUCLEOTIDE SEQUENCE [LARGE SCALE GENOMIC DNA]</scope>
    <source>
        <strain>ATCC 25177 / H37Ra</strain>
    </source>
</reference>
<comment type="function">
    <text evidence="1">Regulates the transcription of the pyrimidine nucleotide (pyr) operon in response to exogenous pyrimidines.</text>
</comment>
<comment type="function">
    <text evidence="1">Also displays a weak uracil phosphoribosyltransferase activity which is not physiologically significant.</text>
</comment>
<comment type="catalytic activity">
    <reaction evidence="1">
        <text>UMP + diphosphate = 5-phospho-alpha-D-ribose 1-diphosphate + uracil</text>
        <dbReference type="Rhea" id="RHEA:13017"/>
        <dbReference type="ChEBI" id="CHEBI:17568"/>
        <dbReference type="ChEBI" id="CHEBI:33019"/>
        <dbReference type="ChEBI" id="CHEBI:57865"/>
        <dbReference type="ChEBI" id="CHEBI:58017"/>
        <dbReference type="EC" id="2.4.2.9"/>
    </reaction>
</comment>
<comment type="similarity">
    <text evidence="1">Belongs to the purine/pyrimidine phosphoribosyltransferase family. PyrR subfamily.</text>
</comment>